<comment type="function">
    <text evidence="1">Catalyzes the conversion of dethiobiotin (DTB) to biotin by the insertion of a sulfur atom into dethiobiotin via a radical-based mechanism.</text>
</comment>
<comment type="catalytic activity">
    <reaction evidence="1">
        <text>(4R,5S)-dethiobiotin + (sulfur carrier)-SH + 2 reduced [2Fe-2S]-[ferredoxin] + 2 S-adenosyl-L-methionine = (sulfur carrier)-H + biotin + 2 5'-deoxyadenosine + 2 L-methionine + 2 oxidized [2Fe-2S]-[ferredoxin]</text>
        <dbReference type="Rhea" id="RHEA:22060"/>
        <dbReference type="Rhea" id="RHEA-COMP:10000"/>
        <dbReference type="Rhea" id="RHEA-COMP:10001"/>
        <dbReference type="Rhea" id="RHEA-COMP:14737"/>
        <dbReference type="Rhea" id="RHEA-COMP:14739"/>
        <dbReference type="ChEBI" id="CHEBI:17319"/>
        <dbReference type="ChEBI" id="CHEBI:29917"/>
        <dbReference type="ChEBI" id="CHEBI:33737"/>
        <dbReference type="ChEBI" id="CHEBI:33738"/>
        <dbReference type="ChEBI" id="CHEBI:57586"/>
        <dbReference type="ChEBI" id="CHEBI:57844"/>
        <dbReference type="ChEBI" id="CHEBI:59789"/>
        <dbReference type="ChEBI" id="CHEBI:64428"/>
        <dbReference type="ChEBI" id="CHEBI:149473"/>
        <dbReference type="EC" id="2.8.1.6"/>
    </reaction>
</comment>
<comment type="cofactor">
    <cofactor evidence="1">
        <name>[4Fe-4S] cluster</name>
        <dbReference type="ChEBI" id="CHEBI:49883"/>
    </cofactor>
    <text evidence="1">Binds 1 [4Fe-4S] cluster. The cluster is coordinated with 3 cysteines and an exchangeable S-adenosyl-L-methionine.</text>
</comment>
<comment type="cofactor">
    <cofactor evidence="1">
        <name>[2Fe-2S] cluster</name>
        <dbReference type="ChEBI" id="CHEBI:190135"/>
    </cofactor>
    <text evidence="1">Binds 1 [2Fe-2S] cluster. The cluster is coordinated with 3 cysteines and 1 arginine.</text>
</comment>
<comment type="pathway">
    <text evidence="1">Cofactor biosynthesis; biotin biosynthesis; biotin from 7,8-diaminononanoate: step 2/2.</text>
</comment>
<comment type="subunit">
    <text evidence="1">Homodimer.</text>
</comment>
<comment type="similarity">
    <text evidence="1">Belongs to the radical SAM superfamily. Biotin synthase family.</text>
</comment>
<gene>
    <name evidence="1" type="primary">bioB</name>
    <name type="ordered locus">Hac_1730</name>
</gene>
<name>BIOB_HELAH</name>
<proteinExistence type="inferred from homology"/>
<accession>Q17VA0</accession>
<reference key="1">
    <citation type="journal article" date="2006" name="PLoS Genet.">
        <title>Who ate whom? Adaptive Helicobacter genomic changes that accompanied a host jump from early humans to large felines.</title>
        <authorList>
            <person name="Eppinger M."/>
            <person name="Baar C."/>
            <person name="Linz B."/>
            <person name="Raddatz G."/>
            <person name="Lanz C."/>
            <person name="Keller H."/>
            <person name="Morelli G."/>
            <person name="Gressmann H."/>
            <person name="Achtman M."/>
            <person name="Schuster S.C."/>
        </authorList>
    </citation>
    <scope>NUCLEOTIDE SEQUENCE [LARGE SCALE GENOMIC DNA]</scope>
    <source>
        <strain>Sheeba</strain>
    </source>
</reference>
<organism>
    <name type="scientific">Helicobacter acinonychis (strain Sheeba)</name>
    <dbReference type="NCBI Taxonomy" id="382638"/>
    <lineage>
        <taxon>Bacteria</taxon>
        <taxon>Pseudomonadati</taxon>
        <taxon>Campylobacterota</taxon>
        <taxon>Epsilonproteobacteria</taxon>
        <taxon>Campylobacterales</taxon>
        <taxon>Helicobacteraceae</taxon>
        <taxon>Helicobacter</taxon>
    </lineage>
</organism>
<dbReference type="EC" id="2.8.1.6" evidence="1"/>
<dbReference type="EMBL" id="AM260522">
    <property type="protein sequence ID" value="CAK00426.1"/>
    <property type="molecule type" value="Genomic_DNA"/>
</dbReference>
<dbReference type="RefSeq" id="WP_011578508.1">
    <property type="nucleotide sequence ID" value="NC_008229.1"/>
</dbReference>
<dbReference type="SMR" id="Q17VA0"/>
<dbReference type="STRING" id="382638.Hac_1730"/>
<dbReference type="GeneID" id="31758965"/>
<dbReference type="KEGG" id="hac:Hac_1730"/>
<dbReference type="eggNOG" id="COG0502">
    <property type="taxonomic scope" value="Bacteria"/>
</dbReference>
<dbReference type="HOGENOM" id="CLU_033172_2_1_7"/>
<dbReference type="OrthoDB" id="9786826at2"/>
<dbReference type="BioCyc" id="HACI382638:HAC_RS07340-MONOMER"/>
<dbReference type="UniPathway" id="UPA00078">
    <property type="reaction ID" value="UER00162"/>
</dbReference>
<dbReference type="Proteomes" id="UP000000775">
    <property type="component" value="Chromosome"/>
</dbReference>
<dbReference type="GO" id="GO:0051537">
    <property type="term" value="F:2 iron, 2 sulfur cluster binding"/>
    <property type="evidence" value="ECO:0007669"/>
    <property type="project" value="UniProtKB-KW"/>
</dbReference>
<dbReference type="GO" id="GO:0051539">
    <property type="term" value="F:4 iron, 4 sulfur cluster binding"/>
    <property type="evidence" value="ECO:0007669"/>
    <property type="project" value="UniProtKB-KW"/>
</dbReference>
<dbReference type="GO" id="GO:0004076">
    <property type="term" value="F:biotin synthase activity"/>
    <property type="evidence" value="ECO:0007669"/>
    <property type="project" value="UniProtKB-UniRule"/>
</dbReference>
<dbReference type="GO" id="GO:0005506">
    <property type="term" value="F:iron ion binding"/>
    <property type="evidence" value="ECO:0007669"/>
    <property type="project" value="UniProtKB-UniRule"/>
</dbReference>
<dbReference type="GO" id="GO:0009102">
    <property type="term" value="P:biotin biosynthetic process"/>
    <property type="evidence" value="ECO:0007669"/>
    <property type="project" value="UniProtKB-UniRule"/>
</dbReference>
<dbReference type="CDD" id="cd01335">
    <property type="entry name" value="Radical_SAM"/>
    <property type="match status" value="1"/>
</dbReference>
<dbReference type="Gene3D" id="3.20.20.70">
    <property type="entry name" value="Aldolase class I"/>
    <property type="match status" value="1"/>
</dbReference>
<dbReference type="HAMAP" id="MF_01694">
    <property type="entry name" value="BioB"/>
    <property type="match status" value="1"/>
</dbReference>
<dbReference type="InterPro" id="IPR013785">
    <property type="entry name" value="Aldolase_TIM"/>
</dbReference>
<dbReference type="InterPro" id="IPR010722">
    <property type="entry name" value="BATS_dom"/>
</dbReference>
<dbReference type="InterPro" id="IPR002684">
    <property type="entry name" value="Biotin_synth/BioAB"/>
</dbReference>
<dbReference type="InterPro" id="IPR024177">
    <property type="entry name" value="Biotin_synthase"/>
</dbReference>
<dbReference type="InterPro" id="IPR006638">
    <property type="entry name" value="Elp3/MiaA/NifB-like_rSAM"/>
</dbReference>
<dbReference type="InterPro" id="IPR007197">
    <property type="entry name" value="rSAM"/>
</dbReference>
<dbReference type="NCBIfam" id="TIGR00433">
    <property type="entry name" value="bioB"/>
    <property type="match status" value="1"/>
</dbReference>
<dbReference type="NCBIfam" id="NF006308">
    <property type="entry name" value="PRK08508.1"/>
    <property type="match status" value="1"/>
</dbReference>
<dbReference type="PANTHER" id="PTHR22976">
    <property type="entry name" value="BIOTIN SYNTHASE"/>
    <property type="match status" value="1"/>
</dbReference>
<dbReference type="PANTHER" id="PTHR22976:SF2">
    <property type="entry name" value="BIOTIN SYNTHASE, MITOCHONDRIAL"/>
    <property type="match status" value="1"/>
</dbReference>
<dbReference type="Pfam" id="PF06968">
    <property type="entry name" value="BATS"/>
    <property type="match status" value="1"/>
</dbReference>
<dbReference type="Pfam" id="PF04055">
    <property type="entry name" value="Radical_SAM"/>
    <property type="match status" value="1"/>
</dbReference>
<dbReference type="PIRSF" id="PIRSF001619">
    <property type="entry name" value="Biotin_synth"/>
    <property type="match status" value="1"/>
</dbReference>
<dbReference type="SFLD" id="SFLDG01060">
    <property type="entry name" value="BATS_domain_containing"/>
    <property type="match status" value="1"/>
</dbReference>
<dbReference type="SFLD" id="SFLDG01278">
    <property type="entry name" value="biotin_synthase_like"/>
    <property type="match status" value="1"/>
</dbReference>
<dbReference type="SMART" id="SM00876">
    <property type="entry name" value="BATS"/>
    <property type="match status" value="1"/>
</dbReference>
<dbReference type="SMART" id="SM00729">
    <property type="entry name" value="Elp3"/>
    <property type="match status" value="1"/>
</dbReference>
<dbReference type="SUPFAM" id="SSF102114">
    <property type="entry name" value="Radical SAM enzymes"/>
    <property type="match status" value="1"/>
</dbReference>
<dbReference type="PROSITE" id="PS51918">
    <property type="entry name" value="RADICAL_SAM"/>
    <property type="match status" value="1"/>
</dbReference>
<protein>
    <recommendedName>
        <fullName evidence="1">Biotin synthase</fullName>
        <ecNumber evidence="1">2.8.1.6</ecNumber>
    </recommendedName>
</protein>
<sequence>MQEIFLCSISNVRSGDCKEDCAYCTQSSHHQGAIKRYKFKDEKVVLQEARALRELGALGFCLVTSGRELDDEKCEYIAKLAKAINQEELGLHLIACCGRADLDQLEFLRDAGIHSYNHNLETSQNFFPKICSTHTWEERFITCENALRAGLGLCSGGIFGLNESWEDRIEMLRALASLSPHTTPINFFIKNPVLPIDAETLSADEALECVLLAKEFLPNARLMAAGGREVVFKDNDKKEAKLFEYGINAVVLGDYLTTKGKAPKKDIERLLSYGLKMAASCH</sequence>
<evidence type="ECO:0000255" key="1">
    <source>
        <dbReference type="HAMAP-Rule" id="MF_01694"/>
    </source>
</evidence>
<evidence type="ECO:0000255" key="2">
    <source>
        <dbReference type="PROSITE-ProRule" id="PRU01266"/>
    </source>
</evidence>
<keyword id="KW-0001">2Fe-2S</keyword>
<keyword id="KW-0004">4Fe-4S</keyword>
<keyword id="KW-0093">Biotin biosynthesis</keyword>
<keyword id="KW-0408">Iron</keyword>
<keyword id="KW-0411">Iron-sulfur</keyword>
<keyword id="KW-0479">Metal-binding</keyword>
<keyword id="KW-0949">S-adenosyl-L-methionine</keyword>
<keyword id="KW-0808">Transferase</keyword>
<feature type="chain" id="PRO_0000381422" description="Biotin synthase">
    <location>
        <begin position="1"/>
        <end position="282"/>
    </location>
</feature>
<feature type="domain" description="Radical SAM core" evidence="2">
    <location>
        <begin position="1"/>
        <end position="228"/>
    </location>
</feature>
<feature type="binding site" evidence="1">
    <location>
        <position position="17"/>
    </location>
    <ligand>
        <name>[4Fe-4S] cluster</name>
        <dbReference type="ChEBI" id="CHEBI:49883"/>
        <note>4Fe-4S-S-AdoMet</note>
    </ligand>
</feature>
<feature type="binding site" evidence="1">
    <location>
        <position position="21"/>
    </location>
    <ligand>
        <name>[4Fe-4S] cluster</name>
        <dbReference type="ChEBI" id="CHEBI:49883"/>
        <note>4Fe-4S-S-AdoMet</note>
    </ligand>
</feature>
<feature type="binding site" evidence="1">
    <location>
        <position position="24"/>
    </location>
    <ligand>
        <name>[4Fe-4S] cluster</name>
        <dbReference type="ChEBI" id="CHEBI:49883"/>
        <note>4Fe-4S-S-AdoMet</note>
    </ligand>
</feature>
<feature type="binding site" evidence="1">
    <location>
        <position position="61"/>
    </location>
    <ligand>
        <name>[2Fe-2S] cluster</name>
        <dbReference type="ChEBI" id="CHEBI:190135"/>
    </ligand>
</feature>
<feature type="binding site" evidence="1">
    <location>
        <position position="96"/>
    </location>
    <ligand>
        <name>[2Fe-2S] cluster</name>
        <dbReference type="ChEBI" id="CHEBI:190135"/>
    </ligand>
</feature>
<feature type="binding site" evidence="1">
    <location>
        <position position="154"/>
    </location>
    <ligand>
        <name>[2Fe-2S] cluster</name>
        <dbReference type="ChEBI" id="CHEBI:190135"/>
    </ligand>
</feature>
<feature type="binding site" evidence="1">
    <location>
        <position position="221"/>
    </location>
    <ligand>
        <name>[2Fe-2S] cluster</name>
        <dbReference type="ChEBI" id="CHEBI:190135"/>
    </ligand>
</feature>